<sequence length="16" mass="1709">FFFLPSLIGGLVSAIK</sequence>
<feature type="peptide" id="PRO_0000442985" description="Peptide Im-6" evidence="1">
    <location>
        <begin position="1"/>
        <end position="16"/>
    </location>
</feature>
<feature type="modified residue" description="Lysine amide; partial" evidence="1">
    <location>
        <position position="16"/>
    </location>
</feature>
<accession>C0HL57</accession>
<protein>
    <recommendedName>
        <fullName evidence="2">Peptide Im-6</fullName>
    </recommendedName>
</protein>
<name>NDB4C_ISOMC</name>
<reference evidence="3" key="1">
    <citation type="journal article" date="2017" name="Toxicon">
        <title>Complete de novo sequencing of antimicrobial peptides in the venom of the scorpion Isometrus maculatus.</title>
        <authorList>
            <person name="Miyashita M."/>
            <person name="Kitanaka A."/>
            <person name="Yakio M."/>
            <person name="Yamazaki Y."/>
            <person name="Nakagawa Y."/>
            <person name="Miyagawa H."/>
        </authorList>
    </citation>
    <scope>PROTEIN SEQUENCE</scope>
    <scope>FUNCTION</scope>
    <scope>SUBCELLULAR LOCATION</scope>
    <scope>MASS SPECTROMETRY</scope>
    <scope>IDENTIFICATION BY MASS SPECTROMETRY</scope>
    <scope>AMIDATION AT LYS-16</scope>
    <source>
        <tissue evidence="2">Venom</tissue>
    </source>
</reference>
<organism evidence="2">
    <name type="scientific">Isometrus maculatus</name>
    <name type="common">Lesser brown scorpion</name>
    <name type="synonym">Scorpio maculatus</name>
    <dbReference type="NCBI Taxonomy" id="497827"/>
    <lineage>
        <taxon>Eukaryota</taxon>
        <taxon>Metazoa</taxon>
        <taxon>Ecdysozoa</taxon>
        <taxon>Arthropoda</taxon>
        <taxon>Chelicerata</taxon>
        <taxon>Arachnida</taxon>
        <taxon>Scorpiones</taxon>
        <taxon>Buthida</taxon>
        <taxon>Buthoidea</taxon>
        <taxon>Buthidae</taxon>
        <taxon>Isometrus</taxon>
    </lineage>
</organism>
<proteinExistence type="evidence at protein level"/>
<comment type="function">
    <text evidence="1">Probably forms pores in target membranes. Has antibacterial activity against Gram-positive bacteria S.aureus NBRC 13276 (MIC=25-50 uM) and B.subtilis NBRC 3009 (MIC=1.3-2.5 uM) but not against Gram-negative bacterium E.coli NBRC 3972.</text>
</comment>
<comment type="subcellular location">
    <subcellularLocation>
        <location evidence="1">Secreted</location>
    </subcellularLocation>
    <subcellularLocation>
        <location evidence="4">Target cell membrane</location>
    </subcellularLocation>
    <text evidence="4">Probably forms a helical membrane channel in the prey.</text>
</comment>
<comment type="tissue specificity">
    <text evidence="4">Expressed by the venom gland.</text>
</comment>
<comment type="mass spectrometry" mass="1707.0" method="MALDI" evidence="1">
    <text>Amidated.</text>
</comment>
<comment type="mass spectrometry" mass="1708.0" method="MALDI" evidence="1"/>
<comment type="similarity">
    <text evidence="3">Belongs to the non-disulfide-bridged peptide (NDBP) superfamily. Short antimicrobial peptide (group 4) family.</text>
</comment>
<evidence type="ECO:0000269" key="1">
    <source>
    </source>
</evidence>
<evidence type="ECO:0000303" key="2">
    <source>
    </source>
</evidence>
<evidence type="ECO:0000305" key="3"/>
<evidence type="ECO:0000305" key="4">
    <source>
    </source>
</evidence>
<keyword id="KW-0027">Amidation</keyword>
<keyword id="KW-0044">Antibiotic</keyword>
<keyword id="KW-0929">Antimicrobial</keyword>
<keyword id="KW-0903">Direct protein sequencing</keyword>
<keyword id="KW-0472">Membrane</keyword>
<keyword id="KW-0964">Secreted</keyword>
<keyword id="KW-1052">Target cell membrane</keyword>
<keyword id="KW-1053">Target membrane</keyword>
<dbReference type="GO" id="GO:0005576">
    <property type="term" value="C:extracellular region"/>
    <property type="evidence" value="ECO:0000314"/>
    <property type="project" value="UniProtKB"/>
</dbReference>
<dbReference type="GO" id="GO:0016020">
    <property type="term" value="C:membrane"/>
    <property type="evidence" value="ECO:0007669"/>
    <property type="project" value="UniProtKB-KW"/>
</dbReference>
<dbReference type="GO" id="GO:0044218">
    <property type="term" value="C:other organism cell membrane"/>
    <property type="evidence" value="ECO:0007669"/>
    <property type="project" value="UniProtKB-KW"/>
</dbReference>
<dbReference type="GO" id="GO:0050830">
    <property type="term" value="P:defense response to Gram-positive bacterium"/>
    <property type="evidence" value="ECO:0000314"/>
    <property type="project" value="UniProtKB"/>
</dbReference>
<dbReference type="GO" id="GO:0031640">
    <property type="term" value="P:killing of cells of another organism"/>
    <property type="evidence" value="ECO:0000314"/>
    <property type="project" value="UniProtKB"/>
</dbReference>